<comment type="similarity">
    <text evidence="3">Belongs to the NAD kinase family.</text>
</comment>
<evidence type="ECO:0000256" key="1">
    <source>
        <dbReference type="SAM" id="MobiDB-lite"/>
    </source>
</evidence>
<evidence type="ECO:0000269" key="2">
    <source>
    </source>
</evidence>
<evidence type="ECO:0000305" key="3"/>
<protein>
    <recommendedName>
        <fullName>Uncharacterized kinase C1B1.02c</fullName>
        <ecNumber>2.7.1.-</ecNumber>
    </recommendedName>
</protein>
<gene>
    <name type="ORF">SPAC1B1.02c</name>
</gene>
<keyword id="KW-0418">Kinase</keyword>
<keyword id="KW-0520">NAD</keyword>
<keyword id="KW-0521">NADP</keyword>
<keyword id="KW-0597">Phosphoprotein</keyword>
<keyword id="KW-1185">Reference proteome</keyword>
<keyword id="KW-0808">Transferase</keyword>
<accession>O13863</accession>
<reference key="1">
    <citation type="journal article" date="2002" name="Nature">
        <title>The genome sequence of Schizosaccharomyces pombe.</title>
        <authorList>
            <person name="Wood V."/>
            <person name="Gwilliam R."/>
            <person name="Rajandream M.A."/>
            <person name="Lyne M.H."/>
            <person name="Lyne R."/>
            <person name="Stewart A."/>
            <person name="Sgouros J.G."/>
            <person name="Peat N."/>
            <person name="Hayles J."/>
            <person name="Baker S.G."/>
            <person name="Basham D."/>
            <person name="Bowman S."/>
            <person name="Brooks K."/>
            <person name="Brown D."/>
            <person name="Brown S."/>
            <person name="Chillingworth T."/>
            <person name="Churcher C.M."/>
            <person name="Collins M."/>
            <person name="Connor R."/>
            <person name="Cronin A."/>
            <person name="Davis P."/>
            <person name="Feltwell T."/>
            <person name="Fraser A."/>
            <person name="Gentles S."/>
            <person name="Goble A."/>
            <person name="Hamlin N."/>
            <person name="Harris D.E."/>
            <person name="Hidalgo J."/>
            <person name="Hodgson G."/>
            <person name="Holroyd S."/>
            <person name="Hornsby T."/>
            <person name="Howarth S."/>
            <person name="Huckle E.J."/>
            <person name="Hunt S."/>
            <person name="Jagels K."/>
            <person name="James K.D."/>
            <person name="Jones L."/>
            <person name="Jones M."/>
            <person name="Leather S."/>
            <person name="McDonald S."/>
            <person name="McLean J."/>
            <person name="Mooney P."/>
            <person name="Moule S."/>
            <person name="Mungall K.L."/>
            <person name="Murphy L.D."/>
            <person name="Niblett D."/>
            <person name="Odell C."/>
            <person name="Oliver K."/>
            <person name="O'Neil S."/>
            <person name="Pearson D."/>
            <person name="Quail M.A."/>
            <person name="Rabbinowitsch E."/>
            <person name="Rutherford K.M."/>
            <person name="Rutter S."/>
            <person name="Saunders D."/>
            <person name="Seeger K."/>
            <person name="Sharp S."/>
            <person name="Skelton J."/>
            <person name="Simmonds M.N."/>
            <person name="Squares R."/>
            <person name="Squares S."/>
            <person name="Stevens K."/>
            <person name="Taylor K."/>
            <person name="Taylor R.G."/>
            <person name="Tivey A."/>
            <person name="Walsh S.V."/>
            <person name="Warren T."/>
            <person name="Whitehead S."/>
            <person name="Woodward J.R."/>
            <person name="Volckaert G."/>
            <person name="Aert R."/>
            <person name="Robben J."/>
            <person name="Grymonprez B."/>
            <person name="Weltjens I."/>
            <person name="Vanstreels E."/>
            <person name="Rieger M."/>
            <person name="Schaefer M."/>
            <person name="Mueller-Auer S."/>
            <person name="Gabel C."/>
            <person name="Fuchs M."/>
            <person name="Duesterhoeft A."/>
            <person name="Fritzc C."/>
            <person name="Holzer E."/>
            <person name="Moestl D."/>
            <person name="Hilbert H."/>
            <person name="Borzym K."/>
            <person name="Langer I."/>
            <person name="Beck A."/>
            <person name="Lehrach H."/>
            <person name="Reinhardt R."/>
            <person name="Pohl T.M."/>
            <person name="Eger P."/>
            <person name="Zimmermann W."/>
            <person name="Wedler H."/>
            <person name="Wambutt R."/>
            <person name="Purnelle B."/>
            <person name="Goffeau A."/>
            <person name="Cadieu E."/>
            <person name="Dreano S."/>
            <person name="Gloux S."/>
            <person name="Lelaure V."/>
            <person name="Mottier S."/>
            <person name="Galibert F."/>
            <person name="Aves S.J."/>
            <person name="Xiang Z."/>
            <person name="Hunt C."/>
            <person name="Moore K."/>
            <person name="Hurst S.M."/>
            <person name="Lucas M."/>
            <person name="Rochet M."/>
            <person name="Gaillardin C."/>
            <person name="Tallada V.A."/>
            <person name="Garzon A."/>
            <person name="Thode G."/>
            <person name="Daga R.R."/>
            <person name="Cruzado L."/>
            <person name="Jimenez J."/>
            <person name="Sanchez M."/>
            <person name="del Rey F."/>
            <person name="Benito J."/>
            <person name="Dominguez A."/>
            <person name="Revuelta J.L."/>
            <person name="Moreno S."/>
            <person name="Armstrong J."/>
            <person name="Forsburg S.L."/>
            <person name="Cerutti L."/>
            <person name="Lowe T."/>
            <person name="McCombie W.R."/>
            <person name="Paulsen I."/>
            <person name="Potashkin J."/>
            <person name="Shpakovski G.V."/>
            <person name="Ussery D."/>
            <person name="Barrell B.G."/>
            <person name="Nurse P."/>
        </authorList>
    </citation>
    <scope>NUCLEOTIDE SEQUENCE [LARGE SCALE GENOMIC DNA]</scope>
    <source>
        <strain>972 / ATCC 24843</strain>
    </source>
</reference>
<reference key="2">
    <citation type="journal article" date="2008" name="J. Proteome Res.">
        <title>Phosphoproteome analysis of fission yeast.</title>
        <authorList>
            <person name="Wilson-Grady J.T."/>
            <person name="Villen J."/>
            <person name="Gygi S.P."/>
        </authorList>
    </citation>
    <scope>PHOSPHORYLATION [LARGE SCALE ANALYSIS] AT SER-72</scope>
    <scope>IDENTIFICATION BY MASS SPECTROMETRY</scope>
</reference>
<name>YDU2_SCHPO</name>
<dbReference type="EC" id="2.7.1.-"/>
<dbReference type="EMBL" id="CU329670">
    <property type="protein sequence ID" value="CAB11081.1"/>
    <property type="molecule type" value="Genomic_DNA"/>
</dbReference>
<dbReference type="PIR" id="T38015">
    <property type="entry name" value="T38015"/>
</dbReference>
<dbReference type="RefSeq" id="NP_594232.1">
    <property type="nucleotide sequence ID" value="NM_001019655.2"/>
</dbReference>
<dbReference type="SMR" id="O13863"/>
<dbReference type="BioGRID" id="278991">
    <property type="interactions" value="3"/>
</dbReference>
<dbReference type="FunCoup" id="O13863">
    <property type="interactions" value="9"/>
</dbReference>
<dbReference type="STRING" id="284812.O13863"/>
<dbReference type="iPTMnet" id="O13863"/>
<dbReference type="PaxDb" id="4896-SPAC1B1.02c.1"/>
<dbReference type="EnsemblFungi" id="SPAC1B1.02c.1">
    <property type="protein sequence ID" value="SPAC1B1.02c.1:pep"/>
    <property type="gene ID" value="SPAC1B1.02c"/>
</dbReference>
<dbReference type="KEGG" id="spo:2542533"/>
<dbReference type="PomBase" id="SPAC1B1.02c"/>
<dbReference type="VEuPathDB" id="FungiDB:SPAC1B1.02c"/>
<dbReference type="eggNOG" id="KOG2178">
    <property type="taxonomic scope" value="Eukaryota"/>
</dbReference>
<dbReference type="HOGENOM" id="CLU_008831_1_4_1"/>
<dbReference type="InParanoid" id="O13863"/>
<dbReference type="OMA" id="WDEDMCR"/>
<dbReference type="PhylomeDB" id="O13863"/>
<dbReference type="Reactome" id="R-SPO-196807">
    <property type="pathway name" value="Nicotinate metabolism"/>
</dbReference>
<dbReference type="PRO" id="PR:O13863"/>
<dbReference type="Proteomes" id="UP000002485">
    <property type="component" value="Chromosome I"/>
</dbReference>
<dbReference type="GO" id="GO:0005829">
    <property type="term" value="C:cytosol"/>
    <property type="evidence" value="ECO:0007005"/>
    <property type="project" value="PomBase"/>
</dbReference>
<dbReference type="GO" id="GO:0003951">
    <property type="term" value="F:NAD+ kinase activity"/>
    <property type="evidence" value="ECO:0000318"/>
    <property type="project" value="GO_Central"/>
</dbReference>
<dbReference type="GO" id="GO:0019674">
    <property type="term" value="P:NAD metabolic process"/>
    <property type="evidence" value="ECO:0000266"/>
    <property type="project" value="PomBase"/>
</dbReference>
<dbReference type="GO" id="GO:0006741">
    <property type="term" value="P:NADP biosynthetic process"/>
    <property type="evidence" value="ECO:0000318"/>
    <property type="project" value="GO_Central"/>
</dbReference>
<dbReference type="Gene3D" id="3.40.50.10330">
    <property type="entry name" value="Probable inorganic polyphosphate/atp-NAD kinase, domain 1"/>
    <property type="match status" value="1"/>
</dbReference>
<dbReference type="Gene3D" id="2.60.200.30">
    <property type="entry name" value="Probable inorganic polyphosphate/atp-NAD kinase, domain 2"/>
    <property type="match status" value="1"/>
</dbReference>
<dbReference type="HAMAP" id="MF_00361">
    <property type="entry name" value="NAD_kinase"/>
    <property type="match status" value="1"/>
</dbReference>
<dbReference type="InterPro" id="IPR017438">
    <property type="entry name" value="ATP-NAD_kinase_N"/>
</dbReference>
<dbReference type="InterPro" id="IPR017437">
    <property type="entry name" value="ATP-NAD_kinase_PpnK-typ_C"/>
</dbReference>
<dbReference type="InterPro" id="IPR016064">
    <property type="entry name" value="NAD/diacylglycerol_kinase_sf"/>
</dbReference>
<dbReference type="InterPro" id="IPR002504">
    <property type="entry name" value="NADK"/>
</dbReference>
<dbReference type="PANTHER" id="PTHR20275">
    <property type="entry name" value="NAD KINASE"/>
    <property type="match status" value="1"/>
</dbReference>
<dbReference type="PANTHER" id="PTHR20275:SF0">
    <property type="entry name" value="NAD KINASE"/>
    <property type="match status" value="1"/>
</dbReference>
<dbReference type="Pfam" id="PF01513">
    <property type="entry name" value="NAD_kinase"/>
    <property type="match status" value="1"/>
</dbReference>
<dbReference type="Pfam" id="PF20143">
    <property type="entry name" value="NAD_kinase_C"/>
    <property type="match status" value="1"/>
</dbReference>
<dbReference type="SUPFAM" id="SSF111331">
    <property type="entry name" value="NAD kinase/diacylglycerol kinase-like"/>
    <property type="match status" value="1"/>
</dbReference>
<feature type="chain" id="PRO_0000120718" description="Uncharacterized kinase C1B1.02c">
    <location>
        <begin position="1"/>
        <end position="537"/>
    </location>
</feature>
<feature type="region of interest" description="Disordered" evidence="1">
    <location>
        <begin position="1"/>
        <end position="33"/>
    </location>
</feature>
<feature type="region of interest" description="Disordered" evidence="1">
    <location>
        <begin position="71"/>
        <end position="98"/>
    </location>
</feature>
<feature type="region of interest" description="Disordered" evidence="1">
    <location>
        <begin position="197"/>
        <end position="220"/>
    </location>
</feature>
<feature type="region of interest" description="Disordered" evidence="1">
    <location>
        <begin position="516"/>
        <end position="537"/>
    </location>
</feature>
<feature type="compositionally biased region" description="Basic and acidic residues" evidence="1">
    <location>
        <begin position="88"/>
        <end position="98"/>
    </location>
</feature>
<feature type="compositionally biased region" description="Polar residues" evidence="1">
    <location>
        <begin position="197"/>
        <end position="214"/>
    </location>
</feature>
<feature type="compositionally biased region" description="Basic residues" evidence="1">
    <location>
        <begin position="516"/>
        <end position="529"/>
    </location>
</feature>
<feature type="modified residue" description="Phosphoserine" evidence="2">
    <location>
        <position position="72"/>
    </location>
</feature>
<proteinExistence type="evidence at protein level"/>
<sequence length="537" mass="60708">MEPGSKLSEDETFSQTFNEEEQEDSRNKDILAFDPSVDNEPLLTKKLSSLSIYSEPSPDEASNLQELKFVSSPPSVRVPRSRRNRRNSRVDSEARKRQFDRVKHSVSNSCKLHLSLQGQEAAQLRSDSLYLEASDKRDLTSLVTRVKELARKLSAARLAFRFRKVLLICNDNKESIERSVELAQWLLDTFSFTPSSSHNNMASSNTQSNTQLSEMESEEKSFNKDVYPNDEYTPFTPKNQFVIYLEDTLASLDVVESLSPKKNVRFWTSELCTQCPNLFDCVITVGDDSAALRASWLFQDVVPPVLSFSTAKAGFLSILPIAEYTKTLDLIFHRGFTVNLRMRFQCSIMRYVGEHSTHICEGQYSVLNELLIDRGPNPFMISLDLYVENEYITTLQSDGVCVSTPTGSTAYSVAAGGSLCHPGIPAILISAICPHSLSFRPIILPDSMTLRIVVPLDARSNAWCAFDGHHRIELGLGDYISISASSFPFPSVIRSKYSKDWFDILRQTLNWNDRKGRQRSSRYKSHVHKTNTSEEQN</sequence>
<organism>
    <name type="scientific">Schizosaccharomyces pombe (strain 972 / ATCC 24843)</name>
    <name type="common">Fission yeast</name>
    <dbReference type="NCBI Taxonomy" id="284812"/>
    <lineage>
        <taxon>Eukaryota</taxon>
        <taxon>Fungi</taxon>
        <taxon>Dikarya</taxon>
        <taxon>Ascomycota</taxon>
        <taxon>Taphrinomycotina</taxon>
        <taxon>Schizosaccharomycetes</taxon>
        <taxon>Schizosaccharomycetales</taxon>
        <taxon>Schizosaccharomycetaceae</taxon>
        <taxon>Schizosaccharomyces</taxon>
    </lineage>
</organism>